<proteinExistence type="inferred from homology"/>
<name>PGAP2_DROPS</name>
<gene>
    <name type="ORF">GA17744</name>
</gene>
<sequence length="255" mass="29764">MLPTYERLNDPKNVFFRMPFARLALAALSLPLGGFFFCVVWSLLFDFVRSTYTHCDVVNYLPSVSAAIGNYEPQKTIWRLAIFLHLPLRLAVAKIYLEYYKEHIRRSRRLLGILACFLNVVEDLALFCLSFWTSADSYETHRNAFVVFIACSECYMLMSYLLNRNARKVVLLPHEEKSLRYKRNLFLVNVLAFGLAGYCFVRHNARCEAGVYTFFALFEYIVVLTNMGFHMTSYWDFYALNVVCDAKHGLYLTQF</sequence>
<evidence type="ECO:0000250" key="1"/>
<evidence type="ECO:0000255" key="2"/>
<evidence type="ECO:0000305" key="3"/>
<accession>Q29M88</accession>
<feature type="chain" id="PRO_0000326103" description="Post-GPI attachment to proteins factor 2">
    <location>
        <begin position="1"/>
        <end position="255"/>
    </location>
</feature>
<feature type="transmembrane region" description="Helical" evidence="2">
    <location>
        <begin position="25"/>
        <end position="45"/>
    </location>
</feature>
<feature type="transmembrane region" description="Helical" evidence="2">
    <location>
        <begin position="80"/>
        <end position="100"/>
    </location>
</feature>
<feature type="transmembrane region" description="Helical" evidence="2">
    <location>
        <begin position="111"/>
        <end position="131"/>
    </location>
</feature>
<feature type="transmembrane region" description="Helical" evidence="2">
    <location>
        <begin position="143"/>
        <end position="163"/>
    </location>
</feature>
<feature type="transmembrane region" description="Helical" evidence="2">
    <location>
        <begin position="185"/>
        <end position="205"/>
    </location>
</feature>
<feature type="transmembrane region" description="Helical" evidence="2">
    <location>
        <begin position="209"/>
        <end position="229"/>
    </location>
</feature>
<comment type="function">
    <text evidence="1">Involved in the lipid remodeling steps of GPI-anchor maturation. Required for stable expression of GPI-anchored proteins at the cell surface (By similarity).</text>
</comment>
<comment type="subcellular location">
    <subcellularLocation>
        <location evidence="1">Golgi apparatus membrane</location>
        <topology evidence="1">Multi-pass membrane protein</topology>
    </subcellularLocation>
    <subcellularLocation>
        <location evidence="1">Endoplasmic reticulum membrane</location>
        <topology evidence="1">Multi-pass membrane protein</topology>
    </subcellularLocation>
</comment>
<comment type="similarity">
    <text evidence="3">Belongs to the PGAP2 family.</text>
</comment>
<reference key="1">
    <citation type="journal article" date="2005" name="Genome Res.">
        <title>Comparative genome sequencing of Drosophila pseudoobscura: chromosomal, gene, and cis-element evolution.</title>
        <authorList>
            <person name="Richards S."/>
            <person name="Liu Y."/>
            <person name="Bettencourt B.R."/>
            <person name="Hradecky P."/>
            <person name="Letovsky S."/>
            <person name="Nielsen R."/>
            <person name="Thornton K."/>
            <person name="Hubisz M.J."/>
            <person name="Chen R."/>
            <person name="Meisel R.P."/>
            <person name="Couronne O."/>
            <person name="Hua S."/>
            <person name="Smith M.A."/>
            <person name="Zhang P."/>
            <person name="Liu J."/>
            <person name="Bussemaker H.J."/>
            <person name="van Batenburg M.F."/>
            <person name="Howells S.L."/>
            <person name="Scherer S.E."/>
            <person name="Sodergren E."/>
            <person name="Matthews B.B."/>
            <person name="Crosby M.A."/>
            <person name="Schroeder A.J."/>
            <person name="Ortiz-Barrientos D."/>
            <person name="Rives C.M."/>
            <person name="Metzker M.L."/>
            <person name="Muzny D.M."/>
            <person name="Scott G."/>
            <person name="Steffen D."/>
            <person name="Wheeler D.A."/>
            <person name="Worley K.C."/>
            <person name="Havlak P."/>
            <person name="Durbin K.J."/>
            <person name="Egan A."/>
            <person name="Gill R."/>
            <person name="Hume J."/>
            <person name="Morgan M.B."/>
            <person name="Miner G."/>
            <person name="Hamilton C."/>
            <person name="Huang Y."/>
            <person name="Waldron L."/>
            <person name="Verduzco D."/>
            <person name="Clerc-Blankenburg K.P."/>
            <person name="Dubchak I."/>
            <person name="Noor M.A.F."/>
            <person name="Anderson W."/>
            <person name="White K.P."/>
            <person name="Clark A.G."/>
            <person name="Schaeffer S.W."/>
            <person name="Gelbart W.M."/>
            <person name="Weinstock G.M."/>
            <person name="Gibbs R.A."/>
        </authorList>
    </citation>
    <scope>NUCLEOTIDE SEQUENCE [LARGE SCALE GENOMIC DNA]</scope>
    <source>
        <strain>MV2-25 / Tucson 14011-0121.94</strain>
    </source>
</reference>
<dbReference type="EMBL" id="CH379060">
    <property type="protein sequence ID" value="EAL33806.2"/>
    <property type="molecule type" value="Genomic_DNA"/>
</dbReference>
<dbReference type="FunCoup" id="Q29M88">
    <property type="interactions" value="658"/>
</dbReference>
<dbReference type="STRING" id="46245.Q29M88"/>
<dbReference type="EnsemblMetazoa" id="FBtr0281495">
    <property type="protein sequence ID" value="FBpp0279933"/>
    <property type="gene ID" value="FBgn0077754"/>
</dbReference>
<dbReference type="KEGG" id="dpo:4817248"/>
<dbReference type="CTD" id="27315"/>
<dbReference type="eggNOG" id="KOG3979">
    <property type="taxonomic scope" value="Eukaryota"/>
</dbReference>
<dbReference type="HOGENOM" id="CLU_061191_1_0_1"/>
<dbReference type="InParanoid" id="Q29M88"/>
<dbReference type="OMA" id="MRHNARC"/>
<dbReference type="Proteomes" id="UP000001819">
    <property type="component" value="Chromosome 4"/>
</dbReference>
<dbReference type="Bgee" id="FBgn0077754">
    <property type="expression patterns" value="Expressed in insect adult head and 2 other cell types or tissues"/>
</dbReference>
<dbReference type="GO" id="GO:0005789">
    <property type="term" value="C:endoplasmic reticulum membrane"/>
    <property type="evidence" value="ECO:0000250"/>
    <property type="project" value="UniProtKB"/>
</dbReference>
<dbReference type="GO" id="GO:0000139">
    <property type="term" value="C:Golgi membrane"/>
    <property type="evidence" value="ECO:0000250"/>
    <property type="project" value="UniProtKB"/>
</dbReference>
<dbReference type="GO" id="GO:0006506">
    <property type="term" value="P:GPI anchor biosynthetic process"/>
    <property type="evidence" value="ECO:0000250"/>
    <property type="project" value="UniProtKB"/>
</dbReference>
<dbReference type="InterPro" id="IPR019402">
    <property type="entry name" value="Frag1/DRAM/Sfk1"/>
</dbReference>
<dbReference type="InterPro" id="IPR039545">
    <property type="entry name" value="PGAP2"/>
</dbReference>
<dbReference type="PANTHER" id="PTHR12892">
    <property type="entry name" value="FGF RECEPTOR ACTIVATING PROTEIN 1"/>
    <property type="match status" value="1"/>
</dbReference>
<dbReference type="PANTHER" id="PTHR12892:SF11">
    <property type="entry name" value="POST-GPI ATTACHMENT TO PROTEINS FACTOR 2"/>
    <property type="match status" value="1"/>
</dbReference>
<dbReference type="Pfam" id="PF10277">
    <property type="entry name" value="Frag1"/>
    <property type="match status" value="1"/>
</dbReference>
<organism>
    <name type="scientific">Drosophila pseudoobscura pseudoobscura</name>
    <name type="common">Fruit fly</name>
    <dbReference type="NCBI Taxonomy" id="46245"/>
    <lineage>
        <taxon>Eukaryota</taxon>
        <taxon>Metazoa</taxon>
        <taxon>Ecdysozoa</taxon>
        <taxon>Arthropoda</taxon>
        <taxon>Hexapoda</taxon>
        <taxon>Insecta</taxon>
        <taxon>Pterygota</taxon>
        <taxon>Neoptera</taxon>
        <taxon>Endopterygota</taxon>
        <taxon>Diptera</taxon>
        <taxon>Brachycera</taxon>
        <taxon>Muscomorpha</taxon>
        <taxon>Ephydroidea</taxon>
        <taxon>Drosophilidae</taxon>
        <taxon>Drosophila</taxon>
        <taxon>Sophophora</taxon>
    </lineage>
</organism>
<keyword id="KW-0256">Endoplasmic reticulum</keyword>
<keyword id="KW-0333">Golgi apparatus</keyword>
<keyword id="KW-0337">GPI-anchor biosynthesis</keyword>
<keyword id="KW-0472">Membrane</keyword>
<keyword id="KW-1185">Reference proteome</keyword>
<keyword id="KW-0812">Transmembrane</keyword>
<keyword id="KW-1133">Transmembrane helix</keyword>
<protein>
    <recommendedName>
        <fullName>Post-GPI attachment to proteins factor 2</fullName>
    </recommendedName>
</protein>